<dbReference type="EMBL" id="DS469573">
    <property type="protein sequence ID" value="EDO41730.1"/>
    <property type="molecule type" value="Genomic_DNA"/>
</dbReference>
<dbReference type="RefSeq" id="XP_001633793.1">
    <property type="nucleotide sequence ID" value="XM_001633743.1"/>
</dbReference>
<dbReference type="SMR" id="A7S3I2"/>
<dbReference type="STRING" id="45351.A7S3I2"/>
<dbReference type="EnsemblMetazoa" id="EDO41730">
    <property type="protein sequence ID" value="EDO41730"/>
    <property type="gene ID" value="NEMVEDRAFT_v1g236890"/>
</dbReference>
<dbReference type="eggNOG" id="ENOG502SDMB">
    <property type="taxonomic scope" value="Eukaryota"/>
</dbReference>
<dbReference type="HOGENOM" id="CLU_185680_0_0_1"/>
<dbReference type="InParanoid" id="A7S3I2"/>
<dbReference type="OMA" id="QSERADC"/>
<dbReference type="PhylomeDB" id="A7S3I2"/>
<dbReference type="Proteomes" id="UP000001593">
    <property type="component" value="Unassembled WGS sequence"/>
</dbReference>
<dbReference type="GO" id="GO:0034464">
    <property type="term" value="C:BBSome"/>
    <property type="evidence" value="ECO:0000318"/>
    <property type="project" value="GO_Central"/>
</dbReference>
<dbReference type="GO" id="GO:0005737">
    <property type="term" value="C:cytoplasm"/>
    <property type="evidence" value="ECO:0007669"/>
    <property type="project" value="UniProtKB-SubCell"/>
</dbReference>
<dbReference type="GO" id="GO:0060271">
    <property type="term" value="P:cilium assembly"/>
    <property type="evidence" value="ECO:0007669"/>
    <property type="project" value="InterPro"/>
</dbReference>
<dbReference type="GO" id="GO:0097500">
    <property type="term" value="P:receptor localization to non-motile cilium"/>
    <property type="evidence" value="ECO:0000318"/>
    <property type="project" value="GO_Central"/>
</dbReference>
<dbReference type="InterPro" id="IPR028233">
    <property type="entry name" value="BBIP10"/>
</dbReference>
<dbReference type="PANTHER" id="PTHR28596">
    <property type="entry name" value="BBSOME-INTERACTING PROTEIN 1"/>
    <property type="match status" value="1"/>
</dbReference>
<dbReference type="PANTHER" id="PTHR28596:SF1">
    <property type="entry name" value="BBSOME-INTERACTING PROTEIN 1"/>
    <property type="match status" value="1"/>
</dbReference>
<dbReference type="Pfam" id="PF14777">
    <property type="entry name" value="BBIP10"/>
    <property type="match status" value="1"/>
</dbReference>
<reference key="1">
    <citation type="journal article" date="2007" name="Science">
        <title>Sea anemone genome reveals ancestral eumetazoan gene repertoire and genomic organization.</title>
        <authorList>
            <person name="Putnam N.H."/>
            <person name="Srivastava M."/>
            <person name="Hellsten U."/>
            <person name="Dirks B."/>
            <person name="Chapman J."/>
            <person name="Salamov A."/>
            <person name="Terry A."/>
            <person name="Shapiro H."/>
            <person name="Lindquist E."/>
            <person name="Kapitonov V.V."/>
            <person name="Jurka J."/>
            <person name="Genikhovich G."/>
            <person name="Grigoriev I.V."/>
            <person name="Lucas S.M."/>
            <person name="Steele R.E."/>
            <person name="Finnerty J.R."/>
            <person name="Technau U."/>
            <person name="Martindale M.Q."/>
            <person name="Rokhsar D.S."/>
        </authorList>
    </citation>
    <scope>NUCLEOTIDE SEQUENCE [LARGE SCALE GENOMIC DNA]</scope>
    <source>
        <strain>CH2 X CH6</strain>
    </source>
</reference>
<protein>
    <recommendedName>
        <fullName>BBSome-interacting protein 1</fullName>
    </recommendedName>
    <alternativeName>
        <fullName>BBSome-interacting protein of 10 kDa</fullName>
    </alternativeName>
</protein>
<gene>
    <name type="primary">bbip1</name>
    <name type="synonym">bbip10</name>
    <name type="ORF">v1g236890</name>
</gene>
<comment type="function">
    <text evidence="1">Required for primary cilia assembly.</text>
</comment>
<comment type="subcellular location">
    <subcellularLocation>
        <location evidence="1">Cell projection</location>
        <location evidence="1">Cilium</location>
    </subcellularLocation>
    <subcellularLocation>
        <location evidence="1">Cytoplasm</location>
    </subcellularLocation>
</comment>
<comment type="similarity">
    <text evidence="2">Belongs to the BBIP10 family.</text>
</comment>
<sequence length="71" mass="8103">MADSSERAAFREVLPKQGLLFTEQTPIPVLCKPKIMPMKSVTLEKLETMQREAQEAVKRQEEEQKLQGGMI</sequence>
<organism>
    <name type="scientific">Nematostella vectensis</name>
    <name type="common">Starlet sea anemone</name>
    <dbReference type="NCBI Taxonomy" id="45351"/>
    <lineage>
        <taxon>Eukaryota</taxon>
        <taxon>Metazoa</taxon>
        <taxon>Cnidaria</taxon>
        <taxon>Anthozoa</taxon>
        <taxon>Hexacorallia</taxon>
        <taxon>Actiniaria</taxon>
        <taxon>Edwardsiidae</taxon>
        <taxon>Nematostella</taxon>
    </lineage>
</organism>
<proteinExistence type="inferred from homology"/>
<keyword id="KW-0966">Cell projection</keyword>
<keyword id="KW-0969">Cilium</keyword>
<keyword id="KW-0963">Cytoplasm</keyword>
<keyword id="KW-1185">Reference proteome</keyword>
<accession>A7S3I2</accession>
<name>BBIP1_NEMVE</name>
<evidence type="ECO:0000250" key="1"/>
<evidence type="ECO:0000305" key="2"/>
<feature type="chain" id="PRO_0000342380" description="BBSome-interacting protein 1">
    <location>
        <begin position="1"/>
        <end position="71"/>
    </location>
</feature>